<feature type="signal peptide" evidence="2">
    <location>
        <begin position="1"/>
        <end position="19"/>
    </location>
</feature>
<feature type="chain" id="PRO_0000352770" description="Elastase inhibitor AFUEI">
    <location>
        <begin position="20"/>
        <end position="87"/>
    </location>
</feature>
<feature type="disulfide bond" evidence="1">
    <location>
        <begin position="24"/>
        <end position="86"/>
    </location>
</feature>
<feature type="helix" evidence="3">
    <location>
        <begin position="21"/>
        <end position="34"/>
    </location>
</feature>
<feature type="turn" evidence="3">
    <location>
        <begin position="35"/>
        <end position="37"/>
    </location>
</feature>
<feature type="helix" evidence="3">
    <location>
        <begin position="42"/>
        <end position="47"/>
    </location>
</feature>
<feature type="strand" evidence="3">
    <location>
        <begin position="51"/>
        <end position="56"/>
    </location>
</feature>
<feature type="strand" evidence="3">
    <location>
        <begin position="61"/>
        <end position="63"/>
    </location>
</feature>
<feature type="strand" evidence="3">
    <location>
        <begin position="71"/>
        <end position="75"/>
    </location>
</feature>
<feature type="strand" evidence="3">
    <location>
        <begin position="79"/>
        <end position="86"/>
    </location>
</feature>
<gene>
    <name type="ORF">AFUA_3G14940</name>
</gene>
<dbReference type="EMBL" id="AAHF01000002">
    <property type="protein sequence ID" value="EAL92092.2"/>
    <property type="molecule type" value="Genomic_DNA"/>
</dbReference>
<dbReference type="RefSeq" id="XP_754130.2">
    <property type="nucleotide sequence ID" value="XM_749037.2"/>
</dbReference>
<dbReference type="PDB" id="3W0D">
    <property type="method" value="X-ray"/>
    <property type="resolution" value="2.30 A"/>
    <property type="chains" value="A/B=20-87"/>
</dbReference>
<dbReference type="PDB" id="3W0E">
    <property type="method" value="X-ray"/>
    <property type="resolution" value="1.80 A"/>
    <property type="chains" value="A/B=20-87"/>
</dbReference>
<dbReference type="PDBsum" id="3W0D"/>
<dbReference type="PDBsum" id="3W0E"/>
<dbReference type="SMR" id="Q4WZ11"/>
<dbReference type="MEROPS" id="I78.001"/>
<dbReference type="EnsemblFungi" id="EAL92092">
    <property type="protein sequence ID" value="EAL92092"/>
    <property type="gene ID" value="AFUA_3G14940"/>
</dbReference>
<dbReference type="GeneID" id="3511769"/>
<dbReference type="KEGG" id="afm:AFUA_3G14940"/>
<dbReference type="VEuPathDB" id="FungiDB:Afu3g14940"/>
<dbReference type="eggNOG" id="ENOG502RPIM">
    <property type="taxonomic scope" value="Eukaryota"/>
</dbReference>
<dbReference type="HOGENOM" id="CLU_2483894_0_0_1"/>
<dbReference type="InParanoid" id="Q4WZ11"/>
<dbReference type="OMA" id="MITMEYI"/>
<dbReference type="OrthoDB" id="4455793at2759"/>
<dbReference type="EvolutionaryTrace" id="Q4WZ11"/>
<dbReference type="Proteomes" id="UP000002530">
    <property type="component" value="Chromosome 3"/>
</dbReference>
<dbReference type="GO" id="GO:0005576">
    <property type="term" value="C:extracellular region"/>
    <property type="evidence" value="ECO:0000314"/>
    <property type="project" value="UniProtKB"/>
</dbReference>
<dbReference type="GO" id="GO:0004857">
    <property type="term" value="F:enzyme inhibitor activity"/>
    <property type="evidence" value="ECO:0000314"/>
    <property type="project" value="AspGD"/>
</dbReference>
<dbReference type="GO" id="GO:0004867">
    <property type="term" value="F:serine-type endopeptidase inhibitor activity"/>
    <property type="evidence" value="ECO:0000314"/>
    <property type="project" value="UniProtKB"/>
</dbReference>
<dbReference type="Gene3D" id="3.30.10.10">
    <property type="entry name" value="Trypsin Inhibitor V, subunit A"/>
    <property type="match status" value="1"/>
</dbReference>
<dbReference type="InterPro" id="IPR021719">
    <property type="entry name" value="Prot_inh_I78"/>
</dbReference>
<dbReference type="Pfam" id="PF11720">
    <property type="entry name" value="Inhibitor_I78"/>
    <property type="match status" value="1"/>
</dbReference>
<proteinExistence type="evidence at protein level"/>
<evidence type="ECO:0000250" key="1"/>
<evidence type="ECO:0000269" key="2">
    <source>
    </source>
</evidence>
<evidence type="ECO:0007829" key="3">
    <source>
        <dbReference type="PDB" id="3W0E"/>
    </source>
</evidence>
<reference key="1">
    <citation type="journal article" date="2005" name="Nature">
        <title>Genomic sequence of the pathogenic and allergenic filamentous fungus Aspergillus fumigatus.</title>
        <authorList>
            <person name="Nierman W.C."/>
            <person name="Pain A."/>
            <person name="Anderson M.J."/>
            <person name="Wortman J.R."/>
            <person name="Kim H.S."/>
            <person name="Arroyo J."/>
            <person name="Berriman M."/>
            <person name="Abe K."/>
            <person name="Archer D.B."/>
            <person name="Bermejo C."/>
            <person name="Bennett J.W."/>
            <person name="Bowyer P."/>
            <person name="Chen D."/>
            <person name="Collins M."/>
            <person name="Coulsen R."/>
            <person name="Davies R."/>
            <person name="Dyer P.S."/>
            <person name="Farman M.L."/>
            <person name="Fedorova N."/>
            <person name="Fedorova N.D."/>
            <person name="Feldblyum T.V."/>
            <person name="Fischer R."/>
            <person name="Fosker N."/>
            <person name="Fraser A."/>
            <person name="Garcia J.L."/>
            <person name="Garcia M.J."/>
            <person name="Goble A."/>
            <person name="Goldman G.H."/>
            <person name="Gomi K."/>
            <person name="Griffith-Jones S."/>
            <person name="Gwilliam R."/>
            <person name="Haas B.J."/>
            <person name="Haas H."/>
            <person name="Harris D.E."/>
            <person name="Horiuchi H."/>
            <person name="Huang J."/>
            <person name="Humphray S."/>
            <person name="Jimenez J."/>
            <person name="Keller N."/>
            <person name="Khouri H."/>
            <person name="Kitamoto K."/>
            <person name="Kobayashi T."/>
            <person name="Konzack S."/>
            <person name="Kulkarni R."/>
            <person name="Kumagai T."/>
            <person name="Lafton A."/>
            <person name="Latge J.-P."/>
            <person name="Li W."/>
            <person name="Lord A."/>
            <person name="Lu C."/>
            <person name="Majoros W.H."/>
            <person name="May G.S."/>
            <person name="Miller B.L."/>
            <person name="Mohamoud Y."/>
            <person name="Molina M."/>
            <person name="Monod M."/>
            <person name="Mouyna I."/>
            <person name="Mulligan S."/>
            <person name="Murphy L.D."/>
            <person name="O'Neil S."/>
            <person name="Paulsen I."/>
            <person name="Penalva M.A."/>
            <person name="Pertea M."/>
            <person name="Price C."/>
            <person name="Pritchard B.L."/>
            <person name="Quail M.A."/>
            <person name="Rabbinowitsch E."/>
            <person name="Rawlins N."/>
            <person name="Rajandream M.A."/>
            <person name="Reichard U."/>
            <person name="Renauld H."/>
            <person name="Robson G.D."/>
            <person name="Rodriguez de Cordoba S."/>
            <person name="Rodriguez-Pena J.M."/>
            <person name="Ronning C.M."/>
            <person name="Rutter S."/>
            <person name="Salzberg S.L."/>
            <person name="Sanchez M."/>
            <person name="Sanchez-Ferrero J.C."/>
            <person name="Saunders D."/>
            <person name="Seeger K."/>
            <person name="Squares R."/>
            <person name="Squares S."/>
            <person name="Takeuchi M."/>
            <person name="Tekaia F."/>
            <person name="Turner G."/>
            <person name="Vazquez de Aldana C.R."/>
            <person name="Weidman J."/>
            <person name="White O."/>
            <person name="Woodward J.R."/>
            <person name="Yu J.-H."/>
            <person name="Fraser C.M."/>
            <person name="Galagan J.E."/>
            <person name="Asai K."/>
            <person name="Machida M."/>
            <person name="Hall N."/>
            <person name="Barrell B.G."/>
            <person name="Denning D.W."/>
        </authorList>
    </citation>
    <scope>NUCLEOTIDE SEQUENCE [LARGE SCALE GENOMIC DNA]</scope>
    <source>
        <strain>ATCC MYA-4609 / CBS 101355 / FGSC A1100 / Af293</strain>
    </source>
</reference>
<reference key="2">
    <citation type="journal article" date="2008" name="J. Med. Microbiol.">
        <title>Biochemical properties and primary structure of elastase inhibitor AFUEI from Aspergillus fumigatus.</title>
        <authorList>
            <person name="Okumura Y."/>
            <person name="Matsui T."/>
            <person name="Ogawa K."/>
            <person name="Uchiya K."/>
            <person name="Nikai T."/>
        </authorList>
    </citation>
    <scope>PROTEIN SEQUENCE OF 20-87</scope>
    <scope>FUNCTION</scope>
    <scope>BIOPHYSICOCHEMICAL PROPERTIES</scope>
    <scope>SUBCELLULAR LOCATION</scope>
    <scope>MASS SPECTROMETRY</scope>
    <source>
        <strain>AFU-12</strain>
    </source>
</reference>
<sequence>MKFSLACLLALAGLQAALADPATCEKEAQFVKQELIGQPYTDAVANALQSNPIRVLHPGDMITMEYIASRLNIQVNENNEIISAHCA</sequence>
<organism>
    <name type="scientific">Aspergillus fumigatus (strain ATCC MYA-4609 / CBS 101355 / FGSC A1100 / Af293)</name>
    <name type="common">Neosartorya fumigata</name>
    <dbReference type="NCBI Taxonomy" id="330879"/>
    <lineage>
        <taxon>Eukaryota</taxon>
        <taxon>Fungi</taxon>
        <taxon>Dikarya</taxon>
        <taxon>Ascomycota</taxon>
        <taxon>Pezizomycotina</taxon>
        <taxon>Eurotiomycetes</taxon>
        <taxon>Eurotiomycetidae</taxon>
        <taxon>Eurotiales</taxon>
        <taxon>Aspergillaceae</taxon>
        <taxon>Aspergillus</taxon>
        <taxon>Aspergillus subgen. Fumigati</taxon>
    </lineage>
</organism>
<name>IELA_ASPFU</name>
<keyword id="KW-0002">3D-structure</keyword>
<keyword id="KW-0903">Direct protein sequencing</keyword>
<keyword id="KW-1015">Disulfide bond</keyword>
<keyword id="KW-0646">Protease inhibitor</keyword>
<keyword id="KW-1185">Reference proteome</keyword>
<keyword id="KW-0964">Secreted</keyword>
<keyword id="KW-0722">Serine protease inhibitor</keyword>
<keyword id="KW-0732">Signal</keyword>
<protein>
    <recommendedName>
        <fullName>Elastase inhibitor AFUEI</fullName>
    </recommendedName>
</protein>
<accession>Q4WZ11</accession>
<comment type="function">
    <text evidence="2">Elastase inhibitor. Non-competitive inhibitor of A.fumigatus elastase with a Ki of 1.6 nM. Inhibits the fibrinogenase and collagenase activities of A.fumigatus elastase. Inhibitor of A.flavus elastase and human leukocyte elastase, and weakly inhibits porcine pancreatic elastase. Does not inhibit elastase from P.aeruginosa or C.atrox venom.</text>
</comment>
<comment type="biophysicochemical properties">
    <temperatureDependence>
        <text evidence="2">Stable to heat treatment. Retains 33% of activity when heated to 100 degrees Celsius for 10 minutes at pH 7.5.</text>
    </temperatureDependence>
</comment>
<comment type="subcellular location">
    <subcellularLocation>
        <location evidence="2">Secreted</location>
    </subcellularLocation>
</comment>
<comment type="mass spectrometry"/>